<gene>
    <name type="ordered locus">SCO1500</name>
    <name type="ORF">SC9C5.24c</name>
</gene>
<name>YQGF_STRCO</name>
<protein>
    <recommendedName>
        <fullName evidence="1">Putative pre-16S rRNA nuclease</fullName>
        <ecNumber evidence="1">3.1.-.-</ecNumber>
    </recommendedName>
</protein>
<dbReference type="EC" id="3.1.-.-" evidence="1"/>
<dbReference type="EMBL" id="AL939109">
    <property type="protein sequence ID" value="CAB93380.1"/>
    <property type="molecule type" value="Genomic_DNA"/>
</dbReference>
<dbReference type="RefSeq" id="NP_625780.1">
    <property type="nucleotide sequence ID" value="NC_003888.3"/>
</dbReference>
<dbReference type="SMR" id="Q9KXQ0"/>
<dbReference type="FunCoup" id="Q9KXQ0">
    <property type="interactions" value="95"/>
</dbReference>
<dbReference type="STRING" id="100226.gene:17759086"/>
<dbReference type="PaxDb" id="100226-SCO1500"/>
<dbReference type="KEGG" id="sco:SCO1500"/>
<dbReference type="PATRIC" id="fig|100226.15.peg.1509"/>
<dbReference type="eggNOG" id="COG0816">
    <property type="taxonomic scope" value="Bacteria"/>
</dbReference>
<dbReference type="HOGENOM" id="CLU_098240_0_0_11"/>
<dbReference type="InParanoid" id="Q9KXQ0"/>
<dbReference type="OrthoDB" id="9790539at2"/>
<dbReference type="PhylomeDB" id="Q9KXQ0"/>
<dbReference type="Proteomes" id="UP000001973">
    <property type="component" value="Chromosome"/>
</dbReference>
<dbReference type="GO" id="GO:0005737">
    <property type="term" value="C:cytoplasm"/>
    <property type="evidence" value="ECO:0007669"/>
    <property type="project" value="UniProtKB-SubCell"/>
</dbReference>
<dbReference type="GO" id="GO:0004518">
    <property type="term" value="F:nuclease activity"/>
    <property type="evidence" value="ECO:0007669"/>
    <property type="project" value="UniProtKB-KW"/>
</dbReference>
<dbReference type="GO" id="GO:0000967">
    <property type="term" value="P:rRNA 5'-end processing"/>
    <property type="evidence" value="ECO:0000318"/>
    <property type="project" value="GO_Central"/>
</dbReference>
<dbReference type="CDD" id="cd16964">
    <property type="entry name" value="YqgF"/>
    <property type="match status" value="1"/>
</dbReference>
<dbReference type="FunFam" id="3.30.420.140:FF:000005">
    <property type="entry name" value="Putative pre-16S rRNA nuclease"/>
    <property type="match status" value="1"/>
</dbReference>
<dbReference type="Gene3D" id="3.30.420.140">
    <property type="entry name" value="YqgF/RNase H-like domain"/>
    <property type="match status" value="1"/>
</dbReference>
<dbReference type="HAMAP" id="MF_00651">
    <property type="entry name" value="Nuclease_YqgF"/>
    <property type="match status" value="1"/>
</dbReference>
<dbReference type="InterPro" id="IPR012337">
    <property type="entry name" value="RNaseH-like_sf"/>
</dbReference>
<dbReference type="InterPro" id="IPR005227">
    <property type="entry name" value="YqgF"/>
</dbReference>
<dbReference type="InterPro" id="IPR006641">
    <property type="entry name" value="YqgF/RNaseH-like_dom"/>
</dbReference>
<dbReference type="InterPro" id="IPR037027">
    <property type="entry name" value="YqgF/RNaseH-like_dom_sf"/>
</dbReference>
<dbReference type="NCBIfam" id="TIGR00250">
    <property type="entry name" value="RNAse_H_YqgF"/>
    <property type="match status" value="1"/>
</dbReference>
<dbReference type="PANTHER" id="PTHR33317">
    <property type="entry name" value="POLYNUCLEOTIDYL TRANSFERASE, RIBONUCLEASE H-LIKE SUPERFAMILY PROTEIN"/>
    <property type="match status" value="1"/>
</dbReference>
<dbReference type="PANTHER" id="PTHR33317:SF4">
    <property type="entry name" value="POLYNUCLEOTIDYL TRANSFERASE, RIBONUCLEASE H-LIKE SUPERFAMILY PROTEIN"/>
    <property type="match status" value="1"/>
</dbReference>
<dbReference type="Pfam" id="PF03652">
    <property type="entry name" value="RuvX"/>
    <property type="match status" value="1"/>
</dbReference>
<dbReference type="SMART" id="SM00732">
    <property type="entry name" value="YqgFc"/>
    <property type="match status" value="1"/>
</dbReference>
<dbReference type="SUPFAM" id="SSF53098">
    <property type="entry name" value="Ribonuclease H-like"/>
    <property type="match status" value="1"/>
</dbReference>
<evidence type="ECO:0000255" key="1">
    <source>
        <dbReference type="HAMAP-Rule" id="MF_00651"/>
    </source>
</evidence>
<keyword id="KW-0963">Cytoplasm</keyword>
<keyword id="KW-0378">Hydrolase</keyword>
<keyword id="KW-0540">Nuclease</keyword>
<keyword id="KW-1185">Reference proteome</keyword>
<keyword id="KW-0690">Ribosome biogenesis</keyword>
<organism>
    <name type="scientific">Streptomyces coelicolor (strain ATCC BAA-471 / A3(2) / M145)</name>
    <dbReference type="NCBI Taxonomy" id="100226"/>
    <lineage>
        <taxon>Bacteria</taxon>
        <taxon>Bacillati</taxon>
        <taxon>Actinomycetota</taxon>
        <taxon>Actinomycetes</taxon>
        <taxon>Kitasatosporales</taxon>
        <taxon>Streptomycetaceae</taxon>
        <taxon>Streptomyces</taxon>
        <taxon>Streptomyces albidoflavus group</taxon>
    </lineage>
</organism>
<comment type="function">
    <text evidence="1">Could be a nuclease involved in processing of the 5'-end of pre-16S rRNA.</text>
</comment>
<comment type="subcellular location">
    <subcellularLocation>
        <location evidence="1">Cytoplasm</location>
    </subcellularLocation>
</comment>
<comment type="similarity">
    <text evidence="1">Belongs to the YqgF nuclease family.</text>
</comment>
<sequence length="167" mass="17700">MSTPENDQADGPRMRRGRRLAVDVGDARIGVASCDPDGILATPVETVPGRDVPAAHRRLRQLVAEYEPIEVVVGLPRSLKGGEGPAAAKVRRFTQELAKGIAPVPVRLVDERMTTVTASQGLRASGVKSKKGRSVIDQAAAVIILQQALESERVSGRPPGEGVEVVI</sequence>
<reference key="1">
    <citation type="journal article" date="2002" name="Nature">
        <title>Complete genome sequence of the model actinomycete Streptomyces coelicolor A3(2).</title>
        <authorList>
            <person name="Bentley S.D."/>
            <person name="Chater K.F."/>
            <person name="Cerdeno-Tarraga A.-M."/>
            <person name="Challis G.L."/>
            <person name="Thomson N.R."/>
            <person name="James K.D."/>
            <person name="Harris D.E."/>
            <person name="Quail M.A."/>
            <person name="Kieser H."/>
            <person name="Harper D."/>
            <person name="Bateman A."/>
            <person name="Brown S."/>
            <person name="Chandra G."/>
            <person name="Chen C.W."/>
            <person name="Collins M."/>
            <person name="Cronin A."/>
            <person name="Fraser A."/>
            <person name="Goble A."/>
            <person name="Hidalgo J."/>
            <person name="Hornsby T."/>
            <person name="Howarth S."/>
            <person name="Huang C.-H."/>
            <person name="Kieser T."/>
            <person name="Larke L."/>
            <person name="Murphy L.D."/>
            <person name="Oliver K."/>
            <person name="O'Neil S."/>
            <person name="Rabbinowitsch E."/>
            <person name="Rajandream M.A."/>
            <person name="Rutherford K.M."/>
            <person name="Rutter S."/>
            <person name="Seeger K."/>
            <person name="Saunders D."/>
            <person name="Sharp S."/>
            <person name="Squares R."/>
            <person name="Squares S."/>
            <person name="Taylor K."/>
            <person name="Warren T."/>
            <person name="Wietzorrek A."/>
            <person name="Woodward J.R."/>
            <person name="Barrell B.G."/>
            <person name="Parkhill J."/>
            <person name="Hopwood D.A."/>
        </authorList>
    </citation>
    <scope>NUCLEOTIDE SEQUENCE [LARGE SCALE GENOMIC DNA]</scope>
    <source>
        <strain>ATCC BAA-471 / A3(2) / M145</strain>
    </source>
</reference>
<feature type="chain" id="PRO_0000172148" description="Putative pre-16S rRNA nuclease">
    <location>
        <begin position="1"/>
        <end position="167"/>
    </location>
</feature>
<accession>Q9KXQ0</accession>
<proteinExistence type="inferred from homology"/>